<evidence type="ECO:0000255" key="1">
    <source>
        <dbReference type="HAMAP-Rule" id="MF_00259"/>
    </source>
</evidence>
<feature type="chain" id="PRO_0000122568" description="Aminomethyltransferase">
    <location>
        <begin position="1"/>
        <end position="362"/>
    </location>
</feature>
<organism>
    <name type="scientific">Listeria monocytogenes serotype 4b (strain F2365)</name>
    <dbReference type="NCBI Taxonomy" id="265669"/>
    <lineage>
        <taxon>Bacteria</taxon>
        <taxon>Bacillati</taxon>
        <taxon>Bacillota</taxon>
        <taxon>Bacilli</taxon>
        <taxon>Bacillales</taxon>
        <taxon>Listeriaceae</taxon>
        <taxon>Listeria</taxon>
    </lineage>
</organism>
<gene>
    <name evidence="1" type="primary">gcvT</name>
    <name type="ordered locus">LMOf2365_1365</name>
</gene>
<reference key="1">
    <citation type="journal article" date="2004" name="Nucleic Acids Res.">
        <title>Whole genome comparisons of serotype 4b and 1/2a strains of the food-borne pathogen Listeria monocytogenes reveal new insights into the core genome components of this species.</title>
        <authorList>
            <person name="Nelson K.E."/>
            <person name="Fouts D.E."/>
            <person name="Mongodin E.F."/>
            <person name="Ravel J."/>
            <person name="DeBoy R.T."/>
            <person name="Kolonay J.F."/>
            <person name="Rasko D.A."/>
            <person name="Angiuoli S.V."/>
            <person name="Gill S.R."/>
            <person name="Paulsen I.T."/>
            <person name="Peterson J.D."/>
            <person name="White O."/>
            <person name="Nelson W.C."/>
            <person name="Nierman W.C."/>
            <person name="Beanan M.J."/>
            <person name="Brinkac L.M."/>
            <person name="Daugherty S.C."/>
            <person name="Dodson R.J."/>
            <person name="Durkin A.S."/>
            <person name="Madupu R."/>
            <person name="Haft D.H."/>
            <person name="Selengut J."/>
            <person name="Van Aken S.E."/>
            <person name="Khouri H.M."/>
            <person name="Fedorova N."/>
            <person name="Forberger H.A."/>
            <person name="Tran B."/>
            <person name="Kathariou S."/>
            <person name="Wonderling L.D."/>
            <person name="Uhlich G.A."/>
            <person name="Bayles D.O."/>
            <person name="Luchansky J.B."/>
            <person name="Fraser C.M."/>
        </authorList>
    </citation>
    <scope>NUCLEOTIDE SEQUENCE [LARGE SCALE GENOMIC DNA]</scope>
    <source>
        <strain>F2365</strain>
    </source>
</reference>
<comment type="function">
    <text evidence="1">The glycine cleavage system catalyzes the degradation of glycine.</text>
</comment>
<comment type="catalytic activity">
    <reaction evidence="1">
        <text>N(6)-[(R)-S(8)-aminomethyldihydrolipoyl]-L-lysyl-[protein] + (6S)-5,6,7,8-tetrahydrofolate = N(6)-[(R)-dihydrolipoyl]-L-lysyl-[protein] + (6R)-5,10-methylene-5,6,7,8-tetrahydrofolate + NH4(+)</text>
        <dbReference type="Rhea" id="RHEA:16945"/>
        <dbReference type="Rhea" id="RHEA-COMP:10475"/>
        <dbReference type="Rhea" id="RHEA-COMP:10492"/>
        <dbReference type="ChEBI" id="CHEBI:15636"/>
        <dbReference type="ChEBI" id="CHEBI:28938"/>
        <dbReference type="ChEBI" id="CHEBI:57453"/>
        <dbReference type="ChEBI" id="CHEBI:83100"/>
        <dbReference type="ChEBI" id="CHEBI:83143"/>
        <dbReference type="EC" id="2.1.2.10"/>
    </reaction>
</comment>
<comment type="subunit">
    <text evidence="1">The glycine cleavage system is composed of four proteins: P, T, L and H.</text>
</comment>
<comment type="similarity">
    <text evidence="1">Belongs to the GcvT family.</text>
</comment>
<keyword id="KW-0032">Aminotransferase</keyword>
<keyword id="KW-0808">Transferase</keyword>
<accession>Q71ZX4</accession>
<proteinExistence type="inferred from homology"/>
<sequence>MTELLKTPIHPLYAKYGAKTIDFGGWDLPVQFAGIKAEHEAVRTDAGLFDVSHMGEILVKGPDSTSYLQYLLTNDIEKIKIGKAQYNIMCYETGGTVDDLVVYKKSETEYILVVNAANTDKDFEWMVKNIRGDVSVTNVSSEYGQLALQGPSAEKILAKLTDVDLSSISFFGFVEDADVAGVKTIISRSGYTGEDGFEIYMPSADAGKVFEAILAEGVAPIGLGARDTLRLEAVLALYGQELSKDITPLEAGLNFAVKLKKEADFIGKEALIKQKEAGLNRKLVGIELIERGIPRHDYPVFLNEEEIGIVTSGTQSPTLGTNIGLALIDTAYTEIGQEVEVGIRNKKIKAKIVPTPFYKRAK</sequence>
<protein>
    <recommendedName>
        <fullName evidence="1">Aminomethyltransferase</fullName>
        <ecNumber evidence="1">2.1.2.10</ecNumber>
    </recommendedName>
    <alternativeName>
        <fullName evidence="1">Glycine cleavage system T protein</fullName>
    </alternativeName>
</protein>
<name>GCST_LISMF</name>
<dbReference type="EC" id="2.1.2.10" evidence="1"/>
<dbReference type="EMBL" id="AE017262">
    <property type="protein sequence ID" value="AAT04140.1"/>
    <property type="molecule type" value="Genomic_DNA"/>
</dbReference>
<dbReference type="RefSeq" id="WP_003726156.1">
    <property type="nucleotide sequence ID" value="NC_002973.6"/>
</dbReference>
<dbReference type="SMR" id="Q71ZX4"/>
<dbReference type="KEGG" id="lmf:LMOf2365_1365"/>
<dbReference type="HOGENOM" id="CLU_007884_10_2_9"/>
<dbReference type="GO" id="GO:0005829">
    <property type="term" value="C:cytosol"/>
    <property type="evidence" value="ECO:0007669"/>
    <property type="project" value="TreeGrafter"/>
</dbReference>
<dbReference type="GO" id="GO:0005960">
    <property type="term" value="C:glycine cleavage complex"/>
    <property type="evidence" value="ECO:0007669"/>
    <property type="project" value="InterPro"/>
</dbReference>
<dbReference type="GO" id="GO:0004047">
    <property type="term" value="F:aminomethyltransferase activity"/>
    <property type="evidence" value="ECO:0007669"/>
    <property type="project" value="UniProtKB-UniRule"/>
</dbReference>
<dbReference type="GO" id="GO:0008483">
    <property type="term" value="F:transaminase activity"/>
    <property type="evidence" value="ECO:0007669"/>
    <property type="project" value="UniProtKB-KW"/>
</dbReference>
<dbReference type="GO" id="GO:0019464">
    <property type="term" value="P:glycine decarboxylation via glycine cleavage system"/>
    <property type="evidence" value="ECO:0007669"/>
    <property type="project" value="UniProtKB-UniRule"/>
</dbReference>
<dbReference type="FunFam" id="2.40.30.110:FF:000003">
    <property type="entry name" value="Aminomethyltransferase"/>
    <property type="match status" value="1"/>
</dbReference>
<dbReference type="FunFam" id="3.30.70.1400:FF:000001">
    <property type="entry name" value="Aminomethyltransferase"/>
    <property type="match status" value="1"/>
</dbReference>
<dbReference type="FunFam" id="4.10.1250.10:FF:000001">
    <property type="entry name" value="Aminomethyltransferase"/>
    <property type="match status" value="1"/>
</dbReference>
<dbReference type="Gene3D" id="2.40.30.110">
    <property type="entry name" value="Aminomethyltransferase beta-barrel domains"/>
    <property type="match status" value="1"/>
</dbReference>
<dbReference type="Gene3D" id="3.30.70.1400">
    <property type="entry name" value="Aminomethyltransferase beta-barrel domains"/>
    <property type="match status" value="1"/>
</dbReference>
<dbReference type="Gene3D" id="4.10.1250.10">
    <property type="entry name" value="Aminomethyltransferase fragment"/>
    <property type="match status" value="1"/>
</dbReference>
<dbReference type="Gene3D" id="3.30.1360.120">
    <property type="entry name" value="Probable tRNA modification gtpase trme, domain 1"/>
    <property type="match status" value="1"/>
</dbReference>
<dbReference type="HAMAP" id="MF_00259">
    <property type="entry name" value="GcvT"/>
    <property type="match status" value="1"/>
</dbReference>
<dbReference type="InterPro" id="IPR006223">
    <property type="entry name" value="GCS_T"/>
</dbReference>
<dbReference type="InterPro" id="IPR022903">
    <property type="entry name" value="GCS_T_bac"/>
</dbReference>
<dbReference type="InterPro" id="IPR013977">
    <property type="entry name" value="GCST_C"/>
</dbReference>
<dbReference type="InterPro" id="IPR006222">
    <property type="entry name" value="GCV_T_N"/>
</dbReference>
<dbReference type="InterPro" id="IPR028896">
    <property type="entry name" value="GcvT/YgfZ/DmdA"/>
</dbReference>
<dbReference type="InterPro" id="IPR029043">
    <property type="entry name" value="GcvT/YgfZ_C"/>
</dbReference>
<dbReference type="InterPro" id="IPR027266">
    <property type="entry name" value="TrmE/GcvT_dom1"/>
</dbReference>
<dbReference type="NCBIfam" id="TIGR00528">
    <property type="entry name" value="gcvT"/>
    <property type="match status" value="1"/>
</dbReference>
<dbReference type="NCBIfam" id="NF001567">
    <property type="entry name" value="PRK00389.1"/>
    <property type="match status" value="1"/>
</dbReference>
<dbReference type="PANTHER" id="PTHR43757">
    <property type="entry name" value="AMINOMETHYLTRANSFERASE"/>
    <property type="match status" value="1"/>
</dbReference>
<dbReference type="PANTHER" id="PTHR43757:SF2">
    <property type="entry name" value="AMINOMETHYLTRANSFERASE, MITOCHONDRIAL"/>
    <property type="match status" value="1"/>
</dbReference>
<dbReference type="Pfam" id="PF01571">
    <property type="entry name" value="GCV_T"/>
    <property type="match status" value="1"/>
</dbReference>
<dbReference type="Pfam" id="PF08669">
    <property type="entry name" value="GCV_T_C"/>
    <property type="match status" value="1"/>
</dbReference>
<dbReference type="PIRSF" id="PIRSF006487">
    <property type="entry name" value="GcvT"/>
    <property type="match status" value="1"/>
</dbReference>
<dbReference type="SUPFAM" id="SSF101790">
    <property type="entry name" value="Aminomethyltransferase beta-barrel domain"/>
    <property type="match status" value="1"/>
</dbReference>
<dbReference type="SUPFAM" id="SSF103025">
    <property type="entry name" value="Folate-binding domain"/>
    <property type="match status" value="1"/>
</dbReference>